<protein>
    <recommendedName>
        <fullName>Uncharacterized protein C1604.16c</fullName>
    </recommendedName>
</protein>
<accession>O94728</accession>
<evidence type="ECO:0000255" key="1">
    <source>
        <dbReference type="PROSITE-ProRule" id="PRU00092"/>
    </source>
</evidence>
<feature type="chain" id="PRO_0000116752" description="Uncharacterized protein C1604.16c">
    <location>
        <begin position="1"/>
        <end position="199"/>
    </location>
</feature>
<feature type="domain" description="G-patch" evidence="1">
    <location>
        <begin position="112"/>
        <end position="160"/>
    </location>
</feature>
<gene>
    <name type="ORF">SPBC1604.16c</name>
</gene>
<name>YG0G_SCHPO</name>
<dbReference type="EMBL" id="CU329671">
    <property type="protein sequence ID" value="CAA22349.1"/>
    <property type="molecule type" value="Genomic_DNA"/>
</dbReference>
<dbReference type="PIR" id="T39498">
    <property type="entry name" value="T39498"/>
</dbReference>
<dbReference type="RefSeq" id="NP_596624.1">
    <property type="nucleotide sequence ID" value="NM_001022545.2"/>
</dbReference>
<dbReference type="BioGRID" id="276286">
    <property type="interactions" value="11"/>
</dbReference>
<dbReference type="PaxDb" id="4896-SPBC1604.16c.1"/>
<dbReference type="EnsemblFungi" id="SPBC1604.16c.1">
    <property type="protein sequence ID" value="SPBC1604.16c.1:pep"/>
    <property type="gene ID" value="SPBC1604.16c"/>
</dbReference>
<dbReference type="KEGG" id="spo:2539734"/>
<dbReference type="PomBase" id="SPBC1604.16c"/>
<dbReference type="VEuPathDB" id="FungiDB:SPBC1604.16c"/>
<dbReference type="eggNOG" id="KOG2384">
    <property type="taxonomic scope" value="Eukaryota"/>
</dbReference>
<dbReference type="HOGENOM" id="CLU_1366946_0_0_1"/>
<dbReference type="InParanoid" id="O94728"/>
<dbReference type="OMA" id="RPRINFV"/>
<dbReference type="PhylomeDB" id="O94728"/>
<dbReference type="PRO" id="PR:O94728"/>
<dbReference type="Proteomes" id="UP000002485">
    <property type="component" value="Chromosome II"/>
</dbReference>
<dbReference type="GO" id="GO:0032153">
    <property type="term" value="C:cell division site"/>
    <property type="evidence" value="ECO:0007005"/>
    <property type="project" value="PomBase"/>
</dbReference>
<dbReference type="GO" id="GO:0005829">
    <property type="term" value="C:cytosol"/>
    <property type="evidence" value="ECO:0007005"/>
    <property type="project" value="PomBase"/>
</dbReference>
<dbReference type="GO" id="GO:0072686">
    <property type="term" value="C:mitotic spindle"/>
    <property type="evidence" value="ECO:0007005"/>
    <property type="project" value="PomBase"/>
</dbReference>
<dbReference type="GO" id="GO:0044732">
    <property type="term" value="C:mitotic spindle pole body"/>
    <property type="evidence" value="ECO:0007005"/>
    <property type="project" value="PomBase"/>
</dbReference>
<dbReference type="GO" id="GO:0005634">
    <property type="term" value="C:nucleus"/>
    <property type="evidence" value="ECO:0007005"/>
    <property type="project" value="PomBase"/>
</dbReference>
<dbReference type="GO" id="GO:0003723">
    <property type="term" value="F:RNA binding"/>
    <property type="evidence" value="ECO:0000255"/>
    <property type="project" value="PomBase"/>
</dbReference>
<dbReference type="InterPro" id="IPR000467">
    <property type="entry name" value="G_patch_dom"/>
</dbReference>
<dbReference type="InterPro" id="IPR039146">
    <property type="entry name" value="GPANK1"/>
</dbReference>
<dbReference type="PANTHER" id="PTHR20923">
    <property type="entry name" value="BAT4 PROTEIN-RELATED"/>
    <property type="match status" value="1"/>
</dbReference>
<dbReference type="PANTHER" id="PTHR20923:SF1">
    <property type="entry name" value="G PATCH DOMAIN AND ANKYRIN REPEAT-CONTAINING PROTEIN 1"/>
    <property type="match status" value="1"/>
</dbReference>
<dbReference type="Pfam" id="PF01585">
    <property type="entry name" value="G-patch"/>
    <property type="match status" value="1"/>
</dbReference>
<dbReference type="SMART" id="SM00443">
    <property type="entry name" value="G_patch"/>
    <property type="match status" value="1"/>
</dbReference>
<dbReference type="PROSITE" id="PS50174">
    <property type="entry name" value="G_PATCH"/>
    <property type="match status" value="1"/>
</dbReference>
<proteinExistence type="predicted"/>
<reference key="1">
    <citation type="journal article" date="2002" name="Nature">
        <title>The genome sequence of Schizosaccharomyces pombe.</title>
        <authorList>
            <person name="Wood V."/>
            <person name="Gwilliam R."/>
            <person name="Rajandream M.A."/>
            <person name="Lyne M.H."/>
            <person name="Lyne R."/>
            <person name="Stewart A."/>
            <person name="Sgouros J.G."/>
            <person name="Peat N."/>
            <person name="Hayles J."/>
            <person name="Baker S.G."/>
            <person name="Basham D."/>
            <person name="Bowman S."/>
            <person name="Brooks K."/>
            <person name="Brown D."/>
            <person name="Brown S."/>
            <person name="Chillingworth T."/>
            <person name="Churcher C.M."/>
            <person name="Collins M."/>
            <person name="Connor R."/>
            <person name="Cronin A."/>
            <person name="Davis P."/>
            <person name="Feltwell T."/>
            <person name="Fraser A."/>
            <person name="Gentles S."/>
            <person name="Goble A."/>
            <person name="Hamlin N."/>
            <person name="Harris D.E."/>
            <person name="Hidalgo J."/>
            <person name="Hodgson G."/>
            <person name="Holroyd S."/>
            <person name="Hornsby T."/>
            <person name="Howarth S."/>
            <person name="Huckle E.J."/>
            <person name="Hunt S."/>
            <person name="Jagels K."/>
            <person name="James K.D."/>
            <person name="Jones L."/>
            <person name="Jones M."/>
            <person name="Leather S."/>
            <person name="McDonald S."/>
            <person name="McLean J."/>
            <person name="Mooney P."/>
            <person name="Moule S."/>
            <person name="Mungall K.L."/>
            <person name="Murphy L.D."/>
            <person name="Niblett D."/>
            <person name="Odell C."/>
            <person name="Oliver K."/>
            <person name="O'Neil S."/>
            <person name="Pearson D."/>
            <person name="Quail M.A."/>
            <person name="Rabbinowitsch E."/>
            <person name="Rutherford K.M."/>
            <person name="Rutter S."/>
            <person name="Saunders D."/>
            <person name="Seeger K."/>
            <person name="Sharp S."/>
            <person name="Skelton J."/>
            <person name="Simmonds M.N."/>
            <person name="Squares R."/>
            <person name="Squares S."/>
            <person name="Stevens K."/>
            <person name="Taylor K."/>
            <person name="Taylor R.G."/>
            <person name="Tivey A."/>
            <person name="Walsh S.V."/>
            <person name="Warren T."/>
            <person name="Whitehead S."/>
            <person name="Woodward J.R."/>
            <person name="Volckaert G."/>
            <person name="Aert R."/>
            <person name="Robben J."/>
            <person name="Grymonprez B."/>
            <person name="Weltjens I."/>
            <person name="Vanstreels E."/>
            <person name="Rieger M."/>
            <person name="Schaefer M."/>
            <person name="Mueller-Auer S."/>
            <person name="Gabel C."/>
            <person name="Fuchs M."/>
            <person name="Duesterhoeft A."/>
            <person name="Fritzc C."/>
            <person name="Holzer E."/>
            <person name="Moestl D."/>
            <person name="Hilbert H."/>
            <person name="Borzym K."/>
            <person name="Langer I."/>
            <person name="Beck A."/>
            <person name="Lehrach H."/>
            <person name="Reinhardt R."/>
            <person name="Pohl T.M."/>
            <person name="Eger P."/>
            <person name="Zimmermann W."/>
            <person name="Wedler H."/>
            <person name="Wambutt R."/>
            <person name="Purnelle B."/>
            <person name="Goffeau A."/>
            <person name="Cadieu E."/>
            <person name="Dreano S."/>
            <person name="Gloux S."/>
            <person name="Lelaure V."/>
            <person name="Mottier S."/>
            <person name="Galibert F."/>
            <person name="Aves S.J."/>
            <person name="Xiang Z."/>
            <person name="Hunt C."/>
            <person name="Moore K."/>
            <person name="Hurst S.M."/>
            <person name="Lucas M."/>
            <person name="Rochet M."/>
            <person name="Gaillardin C."/>
            <person name="Tallada V.A."/>
            <person name="Garzon A."/>
            <person name="Thode G."/>
            <person name="Daga R.R."/>
            <person name="Cruzado L."/>
            <person name="Jimenez J."/>
            <person name="Sanchez M."/>
            <person name="del Rey F."/>
            <person name="Benito J."/>
            <person name="Dominguez A."/>
            <person name="Revuelta J.L."/>
            <person name="Moreno S."/>
            <person name="Armstrong J."/>
            <person name="Forsburg S.L."/>
            <person name="Cerutti L."/>
            <person name="Lowe T."/>
            <person name="McCombie W.R."/>
            <person name="Paulsen I."/>
            <person name="Potashkin J."/>
            <person name="Shpakovski G.V."/>
            <person name="Ussery D."/>
            <person name="Barrell B.G."/>
            <person name="Nurse P."/>
        </authorList>
    </citation>
    <scope>NUCLEOTIDE SEQUENCE [LARGE SCALE GENOMIC DNA]</scope>
    <source>
        <strain>972 / ATCC 24843</strain>
    </source>
</reference>
<keyword id="KW-1185">Reference proteome</keyword>
<organism>
    <name type="scientific">Schizosaccharomyces pombe (strain 972 / ATCC 24843)</name>
    <name type="common">Fission yeast</name>
    <dbReference type="NCBI Taxonomy" id="284812"/>
    <lineage>
        <taxon>Eukaryota</taxon>
        <taxon>Fungi</taxon>
        <taxon>Dikarya</taxon>
        <taxon>Ascomycota</taxon>
        <taxon>Taphrinomycotina</taxon>
        <taxon>Schizosaccharomycetes</taxon>
        <taxon>Schizosaccharomycetales</taxon>
        <taxon>Schizosaccharomycetaceae</taxon>
        <taxon>Schizosaccharomyces</taxon>
    </lineage>
</organism>
<sequence length="199" mass="22599">MENKGNMELSNSYGFYKNGRRVSFVKATSEQSLDEATFIEKGSAQAFYHSLFENDRDNSHTMNSKRDEAGFACEVCQIYIPNSKKINHFKSMTHLLSSQHISNKFQPHLLKPKSLGYRVLSQYGWSPQGDTAGLGLENQGRRAPVRAFRVKNDTIGLGTKIDLEKVAVNKCRKGKRQCQIQHSKDVRLKEALIKHFSSN</sequence>